<keyword id="KW-0067">ATP-binding</keyword>
<keyword id="KW-0149">Chlorophyll biosynthesis</keyword>
<keyword id="KW-0194">Cyanelle</keyword>
<keyword id="KW-0436">Ligase</keyword>
<keyword id="KW-0547">Nucleotide-binding</keyword>
<keyword id="KW-0602">Photosynthesis</keyword>
<keyword id="KW-0934">Plastid</keyword>
<evidence type="ECO:0000255" key="1"/>
<evidence type="ECO:0000305" key="2"/>
<gene>
    <name type="primary">chlI</name>
</gene>
<reference key="1">
    <citation type="journal article" date="1995" name="Plant Mol. Biol. Rep.">
        <title>Nucleotide sequence of the cyanelle DNA from Cyanophora paradoxa.</title>
        <authorList>
            <person name="Stirewalt V.L."/>
            <person name="Michalowski C.B."/>
            <person name="Loeffelhardt W."/>
            <person name="Bohnert H.J."/>
            <person name="Bryant D.A."/>
        </authorList>
    </citation>
    <scope>NUCLEOTIDE SEQUENCE [LARGE SCALE GENOMIC DNA]</scope>
    <source>
        <strain>UTEX LB 555 / Pringsheim</strain>
    </source>
</reference>
<reference key="2">
    <citation type="book" date="1997" name="Eukaryotism and symbiosis">
        <title>The complete sequence of the cyanelle genome of Cyanophora paradoxa: the genetic complexity of a primitive plastid.</title>
        <editorList>
            <person name="Schenk H.E.A."/>
            <person name="Herrmann R."/>
            <person name="Jeon K.W."/>
            <person name="Mueller N.E."/>
            <person name="Schwemmler W."/>
        </editorList>
        <authorList>
            <person name="Loeffelhardt W."/>
            <person name="Stirewalt V.L."/>
            <person name="Michalowski C.B."/>
            <person name="Annarella M."/>
            <person name="Farley J.Y."/>
            <person name="Schluchter W.M."/>
            <person name="Chung S."/>
            <person name="Newmann-Spallart C."/>
            <person name="Steiner J.M."/>
            <person name="Jakowitsch J."/>
            <person name="Bohnert H.J."/>
            <person name="Bryant D.A."/>
        </authorList>
    </citation>
    <scope>NUCLEOTIDE SEQUENCE [LARGE SCALE GENOMIC DNA]</scope>
    <source>
        <strain>UTEX LB 555 / Pringsheim</strain>
    </source>
</reference>
<accession>P48101</accession>
<sequence length="347" mass="39004">MKNNNRPIFPFTAIVGQEEMKLALLLNIVDPKIGGVMIMGDRGTGKSTTIRALADLLPEIDIVANDPFNSHPTDIELMSDNVRQLKENGEEISLIQKKVPMIDLPLGATEDRVCGTIDIEKALTEGVKAFEPGLLAQANRGILYVDEVNLLDDHLVDILLDSAASGWNTVEREGISIRHPARFVLVGSGNPEEGELRPQLLDRFGMHAEIRTVKDPTLRVQIVEERSEFDRSPEDFLQEYKLQQEVLRQRIINAQQQLNNVQLNYEIKVKISQVCSELDVDGLRGDIVTNRAAKALAAFEGRDEVTVDDVLRIITLCLRHRLRKDPLEEIDSGQKVEKVFQRIFSNL</sequence>
<organism>
    <name type="scientific">Cyanophora paradoxa</name>
    <dbReference type="NCBI Taxonomy" id="2762"/>
    <lineage>
        <taxon>Eukaryota</taxon>
        <taxon>Glaucocystophyceae</taxon>
        <taxon>Cyanophoraceae</taxon>
        <taxon>Cyanophora</taxon>
    </lineage>
</organism>
<protein>
    <recommendedName>
        <fullName>Magnesium-chelatase subunit ChlI</fullName>
        <ecNumber>6.6.1.1</ecNumber>
    </recommendedName>
    <alternativeName>
        <fullName>Mg-protoporphyrin IX chelatase</fullName>
    </alternativeName>
</protein>
<comment type="function">
    <text>Involved in chlorophyll biosynthesis; introduces a magnesium ion into protoporphyrin IX to yield Mg-protoporphyrin IX.</text>
</comment>
<comment type="catalytic activity">
    <reaction>
        <text>protoporphyrin IX + Mg(2+) + ATP + H2O = Mg-protoporphyrin IX + ADP + phosphate + 3 H(+)</text>
        <dbReference type="Rhea" id="RHEA:13961"/>
        <dbReference type="ChEBI" id="CHEBI:15377"/>
        <dbReference type="ChEBI" id="CHEBI:15378"/>
        <dbReference type="ChEBI" id="CHEBI:18420"/>
        <dbReference type="ChEBI" id="CHEBI:30616"/>
        <dbReference type="ChEBI" id="CHEBI:43474"/>
        <dbReference type="ChEBI" id="CHEBI:57306"/>
        <dbReference type="ChEBI" id="CHEBI:60492"/>
        <dbReference type="ChEBI" id="CHEBI:456216"/>
        <dbReference type="EC" id="6.6.1.1"/>
    </reaction>
</comment>
<comment type="pathway">
    <text>Porphyrin-containing compound metabolism; chlorophyll biosynthesis.</text>
</comment>
<comment type="subcellular location">
    <subcellularLocation>
        <location>Plastid</location>
        <location>Cyanelle</location>
    </subcellularLocation>
</comment>
<comment type="similarity">
    <text evidence="2">Belongs to the Mg-chelatase subunits D/I family.</text>
</comment>
<feature type="chain" id="PRO_0000206866" description="Magnesium-chelatase subunit ChlI">
    <location>
        <begin position="1"/>
        <end position="347"/>
    </location>
</feature>
<feature type="binding site" evidence="1">
    <location>
        <begin position="41"/>
        <end position="48"/>
    </location>
    <ligand>
        <name>ATP</name>
        <dbReference type="ChEBI" id="CHEBI:30616"/>
    </ligand>
</feature>
<proteinExistence type="inferred from homology"/>
<name>CHLI_CYAPA</name>
<dbReference type="EC" id="6.6.1.1"/>
<dbReference type="EMBL" id="U30821">
    <property type="protein sequence ID" value="AAA81245.1"/>
    <property type="molecule type" value="Genomic_DNA"/>
</dbReference>
<dbReference type="PIR" id="T06902">
    <property type="entry name" value="T06902"/>
</dbReference>
<dbReference type="RefSeq" id="NP_043214.1">
    <property type="nucleotide sequence ID" value="NC_001675.1"/>
</dbReference>
<dbReference type="SMR" id="P48101"/>
<dbReference type="GeneID" id="801509"/>
<dbReference type="UniPathway" id="UPA00668"/>
<dbReference type="GO" id="GO:0009842">
    <property type="term" value="C:cyanelle"/>
    <property type="evidence" value="ECO:0007669"/>
    <property type="project" value="UniProtKB-SubCell"/>
</dbReference>
<dbReference type="GO" id="GO:0005524">
    <property type="term" value="F:ATP binding"/>
    <property type="evidence" value="ECO:0007669"/>
    <property type="project" value="UniProtKB-KW"/>
</dbReference>
<dbReference type="GO" id="GO:0016887">
    <property type="term" value="F:ATP hydrolysis activity"/>
    <property type="evidence" value="ECO:0007669"/>
    <property type="project" value="InterPro"/>
</dbReference>
<dbReference type="GO" id="GO:0016851">
    <property type="term" value="F:magnesium chelatase activity"/>
    <property type="evidence" value="ECO:0007669"/>
    <property type="project" value="UniProtKB-EC"/>
</dbReference>
<dbReference type="GO" id="GO:0015995">
    <property type="term" value="P:chlorophyll biosynthetic process"/>
    <property type="evidence" value="ECO:0007669"/>
    <property type="project" value="UniProtKB-UniPathway"/>
</dbReference>
<dbReference type="GO" id="GO:0015979">
    <property type="term" value="P:photosynthesis"/>
    <property type="evidence" value="ECO:0007669"/>
    <property type="project" value="UniProtKB-KW"/>
</dbReference>
<dbReference type="CDD" id="cd00009">
    <property type="entry name" value="AAA"/>
    <property type="match status" value="1"/>
</dbReference>
<dbReference type="FunFam" id="1.10.8.80:FF:000001">
    <property type="entry name" value="Mg-protoporphyrin IX chelatase"/>
    <property type="match status" value="1"/>
</dbReference>
<dbReference type="FunFam" id="3.40.50.300:FF:000601">
    <property type="entry name" value="Mg-protoporphyrin IX chelatase"/>
    <property type="match status" value="1"/>
</dbReference>
<dbReference type="Gene3D" id="1.10.8.80">
    <property type="entry name" value="Magnesium chelatase subunit I, C-Terminal domain"/>
    <property type="match status" value="1"/>
</dbReference>
<dbReference type="Gene3D" id="3.40.50.300">
    <property type="entry name" value="P-loop containing nucleotide triphosphate hydrolases"/>
    <property type="match status" value="1"/>
</dbReference>
<dbReference type="InterPro" id="IPR003593">
    <property type="entry name" value="AAA+_ATPase"/>
</dbReference>
<dbReference type="InterPro" id="IPR045006">
    <property type="entry name" value="CHLI-like"/>
</dbReference>
<dbReference type="InterPro" id="IPR041628">
    <property type="entry name" value="ChlI/MoxR_AAA_lid"/>
</dbReference>
<dbReference type="InterPro" id="IPR011775">
    <property type="entry name" value="Mg_chelatase_ATPase-isu"/>
</dbReference>
<dbReference type="InterPro" id="IPR000523">
    <property type="entry name" value="Mg_chelatse_chII-like_cat_dom"/>
</dbReference>
<dbReference type="InterPro" id="IPR027417">
    <property type="entry name" value="P-loop_NTPase"/>
</dbReference>
<dbReference type="NCBIfam" id="TIGR02030">
    <property type="entry name" value="BchI-ChlI"/>
    <property type="match status" value="1"/>
</dbReference>
<dbReference type="PANTHER" id="PTHR32039">
    <property type="entry name" value="MAGNESIUM-CHELATASE SUBUNIT CHLI"/>
    <property type="match status" value="1"/>
</dbReference>
<dbReference type="PANTHER" id="PTHR32039:SF9">
    <property type="entry name" value="MAGNESIUM-CHELATASE SUBUNIT CHLI-2, CHLOROPLASTIC"/>
    <property type="match status" value="1"/>
</dbReference>
<dbReference type="Pfam" id="PF17863">
    <property type="entry name" value="AAA_lid_2"/>
    <property type="match status" value="1"/>
</dbReference>
<dbReference type="Pfam" id="PF01078">
    <property type="entry name" value="Mg_chelatase"/>
    <property type="match status" value="1"/>
</dbReference>
<dbReference type="SMART" id="SM00382">
    <property type="entry name" value="AAA"/>
    <property type="match status" value="1"/>
</dbReference>
<dbReference type="SUPFAM" id="SSF52540">
    <property type="entry name" value="P-loop containing nucleoside triphosphate hydrolases"/>
    <property type="match status" value="1"/>
</dbReference>
<geneLocation type="cyanelle"/>